<keyword id="KW-0963">Cytoplasm</keyword>
<keyword id="KW-0238">DNA-binding</keyword>
<keyword id="KW-0275">Fatty acid biosynthesis</keyword>
<keyword id="KW-0276">Fatty acid metabolism</keyword>
<keyword id="KW-0444">Lipid biosynthesis</keyword>
<keyword id="KW-0443">Lipid metabolism</keyword>
<keyword id="KW-0678">Repressor</keyword>
<keyword id="KW-0804">Transcription</keyword>
<keyword id="KW-0805">Transcription regulation</keyword>
<dbReference type="EMBL" id="CP000802">
    <property type="protein sequence ID" value="ABV08375.1"/>
    <property type="molecule type" value="Genomic_DNA"/>
</dbReference>
<dbReference type="SMR" id="A8A771"/>
<dbReference type="KEGG" id="ecx:EcHS_A4197"/>
<dbReference type="HOGENOM" id="CLU_081861_0_0_6"/>
<dbReference type="GO" id="GO:0005737">
    <property type="term" value="C:cytoplasm"/>
    <property type="evidence" value="ECO:0007669"/>
    <property type="project" value="UniProtKB-SubCell"/>
</dbReference>
<dbReference type="GO" id="GO:0003677">
    <property type="term" value="F:DNA binding"/>
    <property type="evidence" value="ECO:0007669"/>
    <property type="project" value="UniProtKB-KW"/>
</dbReference>
<dbReference type="GO" id="GO:0003700">
    <property type="term" value="F:DNA-binding transcription factor activity"/>
    <property type="evidence" value="ECO:0007669"/>
    <property type="project" value="UniProtKB-UniRule"/>
</dbReference>
<dbReference type="GO" id="GO:0006633">
    <property type="term" value="P:fatty acid biosynthetic process"/>
    <property type="evidence" value="ECO:0007669"/>
    <property type="project" value="UniProtKB-UniRule"/>
</dbReference>
<dbReference type="GO" id="GO:0045717">
    <property type="term" value="P:negative regulation of fatty acid biosynthetic process"/>
    <property type="evidence" value="ECO:0007669"/>
    <property type="project" value="UniProtKB-UniRule"/>
</dbReference>
<dbReference type="FunFam" id="1.10.10.60:FF:000034">
    <property type="entry name" value="HTH-type transcriptional repressor FabR"/>
    <property type="match status" value="1"/>
</dbReference>
<dbReference type="FunFam" id="1.10.357.10:FF:000001">
    <property type="entry name" value="HTH-type transcriptional repressor FabR"/>
    <property type="match status" value="1"/>
</dbReference>
<dbReference type="Gene3D" id="1.10.10.60">
    <property type="entry name" value="Homeodomain-like"/>
    <property type="match status" value="1"/>
</dbReference>
<dbReference type="Gene3D" id="1.10.357.10">
    <property type="entry name" value="Tetracycline Repressor, domain 2"/>
    <property type="match status" value="1"/>
</dbReference>
<dbReference type="HAMAP" id="MF_01190">
    <property type="entry name" value="HTH_type_FabR"/>
    <property type="match status" value="1"/>
</dbReference>
<dbReference type="InterPro" id="IPR054129">
    <property type="entry name" value="DesT_TetR_C"/>
</dbReference>
<dbReference type="InterPro" id="IPR009057">
    <property type="entry name" value="Homeodomain-like_sf"/>
</dbReference>
<dbReference type="InterPro" id="IPR001647">
    <property type="entry name" value="HTH_TetR"/>
</dbReference>
<dbReference type="InterPro" id="IPR050692">
    <property type="entry name" value="HTH_transcr_repressor_FabR"/>
</dbReference>
<dbReference type="InterPro" id="IPR023764">
    <property type="entry name" value="Tscrpt_reg_HTH_FabR"/>
</dbReference>
<dbReference type="NCBIfam" id="NF008402">
    <property type="entry name" value="PRK11202.1"/>
    <property type="match status" value="1"/>
</dbReference>
<dbReference type="PANTHER" id="PTHR47752">
    <property type="entry name" value="HTH-TYPE TRANSCRIPTIONAL REPRESSOR FABR"/>
    <property type="match status" value="1"/>
</dbReference>
<dbReference type="PANTHER" id="PTHR47752:SF1">
    <property type="entry name" value="HTH-TYPE TRANSCRIPTIONAL REPRESSOR FABR"/>
    <property type="match status" value="1"/>
</dbReference>
<dbReference type="Pfam" id="PF21943">
    <property type="entry name" value="TetR_C_46"/>
    <property type="match status" value="1"/>
</dbReference>
<dbReference type="Pfam" id="PF00440">
    <property type="entry name" value="TetR_N"/>
    <property type="match status" value="1"/>
</dbReference>
<dbReference type="SUPFAM" id="SSF46689">
    <property type="entry name" value="Homeodomain-like"/>
    <property type="match status" value="1"/>
</dbReference>
<dbReference type="PROSITE" id="PS50977">
    <property type="entry name" value="HTH_TETR_2"/>
    <property type="match status" value="1"/>
</dbReference>
<reference key="1">
    <citation type="journal article" date="2008" name="J. Bacteriol.">
        <title>The pangenome structure of Escherichia coli: comparative genomic analysis of E. coli commensal and pathogenic isolates.</title>
        <authorList>
            <person name="Rasko D.A."/>
            <person name="Rosovitz M.J."/>
            <person name="Myers G.S.A."/>
            <person name="Mongodin E.F."/>
            <person name="Fricke W.F."/>
            <person name="Gajer P."/>
            <person name="Crabtree J."/>
            <person name="Sebaihia M."/>
            <person name="Thomson N.R."/>
            <person name="Chaudhuri R."/>
            <person name="Henderson I.R."/>
            <person name="Sperandio V."/>
            <person name="Ravel J."/>
        </authorList>
    </citation>
    <scope>NUCLEOTIDE SEQUENCE [LARGE SCALE GENOMIC DNA]</scope>
    <source>
        <strain>HS</strain>
    </source>
</reference>
<protein>
    <recommendedName>
        <fullName evidence="1">HTH-type transcriptional repressor FabR</fullName>
    </recommendedName>
</protein>
<evidence type="ECO:0000255" key="1">
    <source>
        <dbReference type="HAMAP-Rule" id="MF_01190"/>
    </source>
</evidence>
<feature type="chain" id="PRO_1000065869" description="HTH-type transcriptional repressor FabR">
    <location>
        <begin position="1"/>
        <end position="215"/>
    </location>
</feature>
<feature type="domain" description="HTH tetR-type" evidence="1">
    <location>
        <begin position="10"/>
        <end position="70"/>
    </location>
</feature>
<feature type="DNA-binding region" description="H-T-H motif" evidence="1">
    <location>
        <begin position="33"/>
        <end position="52"/>
    </location>
</feature>
<comment type="function">
    <text evidence="1">Represses the transcription of fabB, involved in unsaturated fatty acid (UFA) biosynthesis. By controlling UFA production, FabR directly influences the physical properties of the membrane bilayer.</text>
</comment>
<comment type="subunit">
    <text evidence="1">Homodimer.</text>
</comment>
<comment type="subcellular location">
    <subcellularLocation>
        <location evidence="1">Cytoplasm</location>
    </subcellularLocation>
</comment>
<sequence>MGVRAQQKEKTRRSLVEAAFSQLSAERSFASLSLREVAREAGIAPTSFYRHFRDVDELGLTMVDESGLMLRQLMRQARQRIAKGGSVIRTSVSTFMEFIGNNPNAFRLLLRERSGTSAAFRAAVAREIQHFIAELADYLELENHMPRAFTEAQAEAMVTIVFSAGAEALDIGVEQRRQLEERLVLQLRMISKGAYYWYRREQEKTAIIPGNVKDE</sequence>
<proteinExistence type="inferred from homology"/>
<name>FABR_ECOHS</name>
<organism>
    <name type="scientific">Escherichia coli O9:H4 (strain HS)</name>
    <dbReference type="NCBI Taxonomy" id="331112"/>
    <lineage>
        <taxon>Bacteria</taxon>
        <taxon>Pseudomonadati</taxon>
        <taxon>Pseudomonadota</taxon>
        <taxon>Gammaproteobacteria</taxon>
        <taxon>Enterobacterales</taxon>
        <taxon>Enterobacteriaceae</taxon>
        <taxon>Escherichia</taxon>
    </lineage>
</organism>
<accession>A8A771</accession>
<gene>
    <name evidence="1" type="primary">fabR</name>
    <name type="ordered locus">EcHS_A4197</name>
</gene>